<protein>
    <recommendedName>
        <fullName evidence="1">Ribosome-binding factor A</fullName>
    </recommendedName>
</protein>
<evidence type="ECO:0000255" key="1">
    <source>
        <dbReference type="HAMAP-Rule" id="MF_00003"/>
    </source>
</evidence>
<feature type="chain" id="PRO_0000102748" description="Ribosome-binding factor A">
    <location>
        <begin position="1"/>
        <end position="116"/>
    </location>
</feature>
<keyword id="KW-0963">Cytoplasm</keyword>
<keyword id="KW-0690">Ribosome biogenesis</keyword>
<gene>
    <name evidence="1" type="primary">rbfA</name>
    <name type="ordered locus">SpyM3_1494</name>
</gene>
<organism>
    <name type="scientific">Streptococcus pyogenes serotype M3 (strain ATCC BAA-595 / MGAS315)</name>
    <dbReference type="NCBI Taxonomy" id="198466"/>
    <lineage>
        <taxon>Bacteria</taxon>
        <taxon>Bacillati</taxon>
        <taxon>Bacillota</taxon>
        <taxon>Bacilli</taxon>
        <taxon>Lactobacillales</taxon>
        <taxon>Streptococcaceae</taxon>
        <taxon>Streptococcus</taxon>
    </lineage>
</organism>
<reference key="1">
    <citation type="journal article" date="2002" name="Proc. Natl. Acad. Sci. U.S.A.">
        <title>Genome sequence of a serotype M3 strain of group A Streptococcus: phage-encoded toxins, the high-virulence phenotype, and clone emergence.</title>
        <authorList>
            <person name="Beres S.B."/>
            <person name="Sylva G.L."/>
            <person name="Barbian K.D."/>
            <person name="Lei B."/>
            <person name="Hoff J.S."/>
            <person name="Mammarella N.D."/>
            <person name="Liu M.-Y."/>
            <person name="Smoot J.C."/>
            <person name="Porcella S.F."/>
            <person name="Parkins L.D."/>
            <person name="Campbell D.S."/>
            <person name="Smith T.M."/>
            <person name="McCormick J.K."/>
            <person name="Leung D.Y.M."/>
            <person name="Schlievert P.M."/>
            <person name="Musser J.M."/>
        </authorList>
    </citation>
    <scope>NUCLEOTIDE SEQUENCE [LARGE SCALE GENOMIC DNA]</scope>
    <source>
        <strain>ATCC BAA-595 / MGAS315</strain>
    </source>
</reference>
<accession>P0DD80</accession>
<accession>P65972</accession>
<accession>Q99YG2</accession>
<dbReference type="EMBL" id="AE014074">
    <property type="protein sequence ID" value="AAM80101.1"/>
    <property type="molecule type" value="Genomic_DNA"/>
</dbReference>
<dbReference type="RefSeq" id="WP_002994317.1">
    <property type="nucleotide sequence ID" value="NC_004070.1"/>
</dbReference>
<dbReference type="SMR" id="P0DD80"/>
<dbReference type="GeneID" id="83690071"/>
<dbReference type="KEGG" id="spg:SpyM3_1494"/>
<dbReference type="HOGENOM" id="CLU_089475_3_0_9"/>
<dbReference type="Proteomes" id="UP000000564">
    <property type="component" value="Chromosome"/>
</dbReference>
<dbReference type="GO" id="GO:0005829">
    <property type="term" value="C:cytosol"/>
    <property type="evidence" value="ECO:0007669"/>
    <property type="project" value="TreeGrafter"/>
</dbReference>
<dbReference type="GO" id="GO:0043024">
    <property type="term" value="F:ribosomal small subunit binding"/>
    <property type="evidence" value="ECO:0007669"/>
    <property type="project" value="TreeGrafter"/>
</dbReference>
<dbReference type="GO" id="GO:0030490">
    <property type="term" value="P:maturation of SSU-rRNA"/>
    <property type="evidence" value="ECO:0007669"/>
    <property type="project" value="UniProtKB-UniRule"/>
</dbReference>
<dbReference type="Gene3D" id="3.30.300.20">
    <property type="match status" value="1"/>
</dbReference>
<dbReference type="HAMAP" id="MF_00003">
    <property type="entry name" value="RbfA"/>
    <property type="match status" value="1"/>
</dbReference>
<dbReference type="InterPro" id="IPR015946">
    <property type="entry name" value="KH_dom-like_a/b"/>
</dbReference>
<dbReference type="InterPro" id="IPR000238">
    <property type="entry name" value="RbfA"/>
</dbReference>
<dbReference type="InterPro" id="IPR023799">
    <property type="entry name" value="RbfA_dom_sf"/>
</dbReference>
<dbReference type="InterPro" id="IPR020053">
    <property type="entry name" value="Ribosome-bd_factorA_CS"/>
</dbReference>
<dbReference type="NCBIfam" id="TIGR00082">
    <property type="entry name" value="rbfA"/>
    <property type="match status" value="1"/>
</dbReference>
<dbReference type="PANTHER" id="PTHR33515">
    <property type="entry name" value="RIBOSOME-BINDING FACTOR A, CHLOROPLASTIC-RELATED"/>
    <property type="match status" value="1"/>
</dbReference>
<dbReference type="PANTHER" id="PTHR33515:SF1">
    <property type="entry name" value="RIBOSOME-BINDING FACTOR A, CHLOROPLASTIC-RELATED"/>
    <property type="match status" value="1"/>
</dbReference>
<dbReference type="Pfam" id="PF02033">
    <property type="entry name" value="RBFA"/>
    <property type="match status" value="1"/>
</dbReference>
<dbReference type="SUPFAM" id="SSF89919">
    <property type="entry name" value="Ribosome-binding factor A, RbfA"/>
    <property type="match status" value="1"/>
</dbReference>
<dbReference type="PROSITE" id="PS01319">
    <property type="entry name" value="RBFA"/>
    <property type="match status" value="1"/>
</dbReference>
<name>RBFA_STRP3</name>
<sequence length="116" mass="13212">MANHRIDRVGMEIKREVNDILQKKVRDPRVQGVTITEVQMQGDLSLAKVYYTIMSDLASDNQKAQTGLEKATGTIKRELGKQLTMYKIPDLVFEKDNSIAYGNKIDQLLRDLDNKS</sequence>
<proteinExistence type="inferred from homology"/>
<comment type="function">
    <text evidence="1">One of several proteins that assist in the late maturation steps of the functional core of the 30S ribosomal subunit. Associates with free 30S ribosomal subunits (but not with 30S subunits that are part of 70S ribosomes or polysomes). Required for efficient processing of 16S rRNA. May interact with the 5'-terminal helix region of 16S rRNA.</text>
</comment>
<comment type="subunit">
    <text evidence="1">Monomer. Binds 30S ribosomal subunits, but not 50S ribosomal subunits or 70S ribosomes.</text>
</comment>
<comment type="subcellular location">
    <subcellularLocation>
        <location evidence="1">Cytoplasm</location>
    </subcellularLocation>
</comment>
<comment type="similarity">
    <text evidence="1">Belongs to the RbfA family.</text>
</comment>